<gene>
    <name evidence="1" type="primary">rplT</name>
    <name type="ordered locus">A1C_04770</name>
</gene>
<accession>A8GP89</accession>
<evidence type="ECO:0000255" key="1">
    <source>
        <dbReference type="HAMAP-Rule" id="MF_00382"/>
    </source>
</evidence>
<evidence type="ECO:0000305" key="2"/>
<reference key="1">
    <citation type="submission" date="2007-09" db="EMBL/GenBank/DDBJ databases">
        <title>Complete genome sequence of Rickettsia akari.</title>
        <authorList>
            <person name="Madan A."/>
            <person name="Fahey J."/>
            <person name="Helton E."/>
            <person name="Ketteman M."/>
            <person name="Madan A."/>
            <person name="Rodrigues S."/>
            <person name="Sanchez A."/>
            <person name="Whiting M."/>
            <person name="Dasch G."/>
            <person name="Eremeeva M."/>
        </authorList>
    </citation>
    <scope>NUCLEOTIDE SEQUENCE [LARGE SCALE GENOMIC DNA]</scope>
    <source>
        <strain>Hartford</strain>
    </source>
</reference>
<organism>
    <name type="scientific">Rickettsia akari (strain Hartford)</name>
    <dbReference type="NCBI Taxonomy" id="293614"/>
    <lineage>
        <taxon>Bacteria</taxon>
        <taxon>Pseudomonadati</taxon>
        <taxon>Pseudomonadota</taxon>
        <taxon>Alphaproteobacteria</taxon>
        <taxon>Rickettsiales</taxon>
        <taxon>Rickettsiaceae</taxon>
        <taxon>Rickettsieae</taxon>
        <taxon>Rickettsia</taxon>
        <taxon>spotted fever group</taxon>
    </lineage>
</organism>
<keyword id="KW-0687">Ribonucleoprotein</keyword>
<keyword id="KW-0689">Ribosomal protein</keyword>
<keyword id="KW-0694">RNA-binding</keyword>
<keyword id="KW-0699">rRNA-binding</keyword>
<protein>
    <recommendedName>
        <fullName evidence="1">Large ribosomal subunit protein bL20</fullName>
    </recommendedName>
    <alternativeName>
        <fullName evidence="2">50S ribosomal protein L20</fullName>
    </alternativeName>
</protein>
<feature type="chain" id="PRO_1000049054" description="Large ribosomal subunit protein bL20">
    <location>
        <begin position="1"/>
        <end position="117"/>
    </location>
</feature>
<sequence>MTRAKSGKISKNRHKKILKLAKGYRGRANSCFRVAIEKVEKALQYAYRDRRNRKRDFRGLWIQRINAAVREHGFVYSQFIGALKKAEIDIDRKVLAELAVNNSDGFASIVEKTKAHI</sequence>
<comment type="function">
    <text evidence="1">Binds directly to 23S ribosomal RNA and is necessary for the in vitro assembly process of the 50S ribosomal subunit. It is not involved in the protein synthesizing functions of that subunit.</text>
</comment>
<comment type="similarity">
    <text evidence="1">Belongs to the bacterial ribosomal protein bL20 family.</text>
</comment>
<name>RL20_RICAH</name>
<proteinExistence type="inferred from homology"/>
<dbReference type="EMBL" id="CP000847">
    <property type="protein sequence ID" value="ABV75214.1"/>
    <property type="molecule type" value="Genomic_DNA"/>
</dbReference>
<dbReference type="RefSeq" id="WP_012149844.1">
    <property type="nucleotide sequence ID" value="NC_009881.1"/>
</dbReference>
<dbReference type="SMR" id="A8GP89"/>
<dbReference type="STRING" id="293614.A1C_04770"/>
<dbReference type="KEGG" id="rak:A1C_04770"/>
<dbReference type="eggNOG" id="COG0292">
    <property type="taxonomic scope" value="Bacteria"/>
</dbReference>
<dbReference type="HOGENOM" id="CLU_123265_0_1_5"/>
<dbReference type="Proteomes" id="UP000006830">
    <property type="component" value="Chromosome"/>
</dbReference>
<dbReference type="GO" id="GO:1990904">
    <property type="term" value="C:ribonucleoprotein complex"/>
    <property type="evidence" value="ECO:0007669"/>
    <property type="project" value="UniProtKB-KW"/>
</dbReference>
<dbReference type="GO" id="GO:0005840">
    <property type="term" value="C:ribosome"/>
    <property type="evidence" value="ECO:0007669"/>
    <property type="project" value="UniProtKB-KW"/>
</dbReference>
<dbReference type="GO" id="GO:0019843">
    <property type="term" value="F:rRNA binding"/>
    <property type="evidence" value="ECO:0007669"/>
    <property type="project" value="UniProtKB-UniRule"/>
</dbReference>
<dbReference type="GO" id="GO:0003735">
    <property type="term" value="F:structural constituent of ribosome"/>
    <property type="evidence" value="ECO:0007669"/>
    <property type="project" value="InterPro"/>
</dbReference>
<dbReference type="GO" id="GO:0000027">
    <property type="term" value="P:ribosomal large subunit assembly"/>
    <property type="evidence" value="ECO:0007669"/>
    <property type="project" value="UniProtKB-UniRule"/>
</dbReference>
<dbReference type="GO" id="GO:0006412">
    <property type="term" value="P:translation"/>
    <property type="evidence" value="ECO:0007669"/>
    <property type="project" value="InterPro"/>
</dbReference>
<dbReference type="CDD" id="cd07026">
    <property type="entry name" value="Ribosomal_L20"/>
    <property type="match status" value="1"/>
</dbReference>
<dbReference type="FunFam" id="1.10.1900.20:FF:000001">
    <property type="entry name" value="50S ribosomal protein L20"/>
    <property type="match status" value="1"/>
</dbReference>
<dbReference type="Gene3D" id="6.10.160.10">
    <property type="match status" value="1"/>
</dbReference>
<dbReference type="Gene3D" id="1.10.1900.20">
    <property type="entry name" value="Ribosomal protein L20"/>
    <property type="match status" value="1"/>
</dbReference>
<dbReference type="HAMAP" id="MF_00382">
    <property type="entry name" value="Ribosomal_bL20"/>
    <property type="match status" value="1"/>
</dbReference>
<dbReference type="InterPro" id="IPR005813">
    <property type="entry name" value="Ribosomal_bL20"/>
</dbReference>
<dbReference type="InterPro" id="IPR049946">
    <property type="entry name" value="RIBOSOMAL_L20_CS"/>
</dbReference>
<dbReference type="InterPro" id="IPR035566">
    <property type="entry name" value="Ribosomal_protein_bL20_C"/>
</dbReference>
<dbReference type="NCBIfam" id="TIGR01032">
    <property type="entry name" value="rplT_bact"/>
    <property type="match status" value="1"/>
</dbReference>
<dbReference type="PANTHER" id="PTHR10986">
    <property type="entry name" value="39S RIBOSOMAL PROTEIN L20"/>
    <property type="match status" value="1"/>
</dbReference>
<dbReference type="Pfam" id="PF00453">
    <property type="entry name" value="Ribosomal_L20"/>
    <property type="match status" value="1"/>
</dbReference>
<dbReference type="PRINTS" id="PR00062">
    <property type="entry name" value="RIBOSOMALL20"/>
</dbReference>
<dbReference type="SUPFAM" id="SSF74731">
    <property type="entry name" value="Ribosomal protein L20"/>
    <property type="match status" value="1"/>
</dbReference>
<dbReference type="PROSITE" id="PS00937">
    <property type="entry name" value="RIBOSOMAL_L20"/>
    <property type="match status" value="1"/>
</dbReference>